<dbReference type="EMBL" id="CP001110">
    <property type="protein sequence ID" value="ACF44591.1"/>
    <property type="molecule type" value="Genomic_DNA"/>
</dbReference>
<dbReference type="RefSeq" id="WP_012509065.1">
    <property type="nucleotide sequence ID" value="NC_011060.1"/>
</dbReference>
<dbReference type="SMR" id="B4SER5"/>
<dbReference type="STRING" id="324925.Ppha_2402"/>
<dbReference type="KEGG" id="pph:Ppha_2402"/>
<dbReference type="eggNOG" id="COG0254">
    <property type="taxonomic scope" value="Bacteria"/>
</dbReference>
<dbReference type="HOGENOM" id="CLU_114306_4_3_10"/>
<dbReference type="OrthoDB" id="9803251at2"/>
<dbReference type="Proteomes" id="UP000002724">
    <property type="component" value="Chromosome"/>
</dbReference>
<dbReference type="GO" id="GO:1990904">
    <property type="term" value="C:ribonucleoprotein complex"/>
    <property type="evidence" value="ECO:0007669"/>
    <property type="project" value="UniProtKB-KW"/>
</dbReference>
<dbReference type="GO" id="GO:0005840">
    <property type="term" value="C:ribosome"/>
    <property type="evidence" value="ECO:0007669"/>
    <property type="project" value="UniProtKB-KW"/>
</dbReference>
<dbReference type="GO" id="GO:0019843">
    <property type="term" value="F:rRNA binding"/>
    <property type="evidence" value="ECO:0007669"/>
    <property type="project" value="UniProtKB-KW"/>
</dbReference>
<dbReference type="GO" id="GO:0003735">
    <property type="term" value="F:structural constituent of ribosome"/>
    <property type="evidence" value="ECO:0007669"/>
    <property type="project" value="InterPro"/>
</dbReference>
<dbReference type="GO" id="GO:0006412">
    <property type="term" value="P:translation"/>
    <property type="evidence" value="ECO:0007669"/>
    <property type="project" value="UniProtKB-UniRule"/>
</dbReference>
<dbReference type="Gene3D" id="4.10.830.30">
    <property type="entry name" value="Ribosomal protein L31"/>
    <property type="match status" value="1"/>
</dbReference>
<dbReference type="HAMAP" id="MF_00501">
    <property type="entry name" value="Ribosomal_bL31_1"/>
    <property type="match status" value="1"/>
</dbReference>
<dbReference type="InterPro" id="IPR034704">
    <property type="entry name" value="Ribosomal_bL28/bL31-like_sf"/>
</dbReference>
<dbReference type="InterPro" id="IPR002150">
    <property type="entry name" value="Ribosomal_bL31"/>
</dbReference>
<dbReference type="InterPro" id="IPR027491">
    <property type="entry name" value="Ribosomal_bL31_A"/>
</dbReference>
<dbReference type="InterPro" id="IPR042105">
    <property type="entry name" value="Ribosomal_bL31_sf"/>
</dbReference>
<dbReference type="NCBIfam" id="TIGR00105">
    <property type="entry name" value="L31"/>
    <property type="match status" value="1"/>
</dbReference>
<dbReference type="NCBIfam" id="NF000612">
    <property type="entry name" value="PRK00019.1"/>
    <property type="match status" value="1"/>
</dbReference>
<dbReference type="NCBIfam" id="NF001809">
    <property type="entry name" value="PRK00528.1"/>
    <property type="match status" value="1"/>
</dbReference>
<dbReference type="PANTHER" id="PTHR33280">
    <property type="entry name" value="50S RIBOSOMAL PROTEIN L31, CHLOROPLASTIC"/>
    <property type="match status" value="1"/>
</dbReference>
<dbReference type="PANTHER" id="PTHR33280:SF1">
    <property type="entry name" value="LARGE RIBOSOMAL SUBUNIT PROTEIN BL31C"/>
    <property type="match status" value="1"/>
</dbReference>
<dbReference type="Pfam" id="PF01197">
    <property type="entry name" value="Ribosomal_L31"/>
    <property type="match status" value="1"/>
</dbReference>
<dbReference type="PRINTS" id="PR01249">
    <property type="entry name" value="RIBOSOMALL31"/>
</dbReference>
<dbReference type="SUPFAM" id="SSF143800">
    <property type="entry name" value="L28p-like"/>
    <property type="match status" value="1"/>
</dbReference>
<dbReference type="PROSITE" id="PS01143">
    <property type="entry name" value="RIBOSOMAL_L31"/>
    <property type="match status" value="1"/>
</dbReference>
<protein>
    <recommendedName>
        <fullName evidence="1">Large ribosomal subunit protein bL31</fullName>
    </recommendedName>
    <alternativeName>
        <fullName evidence="2">50S ribosomal protein L31</fullName>
    </alternativeName>
</protein>
<accession>B4SER5</accession>
<reference key="1">
    <citation type="submission" date="2008-06" db="EMBL/GenBank/DDBJ databases">
        <title>Complete sequence of Pelodictyon phaeoclathratiforme BU-1.</title>
        <authorList>
            <consortium name="US DOE Joint Genome Institute"/>
            <person name="Lucas S."/>
            <person name="Copeland A."/>
            <person name="Lapidus A."/>
            <person name="Glavina del Rio T."/>
            <person name="Dalin E."/>
            <person name="Tice H."/>
            <person name="Bruce D."/>
            <person name="Goodwin L."/>
            <person name="Pitluck S."/>
            <person name="Schmutz J."/>
            <person name="Larimer F."/>
            <person name="Land M."/>
            <person name="Hauser L."/>
            <person name="Kyrpides N."/>
            <person name="Mikhailova N."/>
            <person name="Liu Z."/>
            <person name="Li T."/>
            <person name="Zhao F."/>
            <person name="Overmann J."/>
            <person name="Bryant D.A."/>
            <person name="Richardson P."/>
        </authorList>
    </citation>
    <scope>NUCLEOTIDE SEQUENCE [LARGE SCALE GENOMIC DNA]</scope>
    <source>
        <strain>DSM 5477 / BU-1</strain>
    </source>
</reference>
<name>RL31_PELPB</name>
<proteinExistence type="inferred from homology"/>
<feature type="chain" id="PRO_1000126681" description="Large ribosomal subunit protein bL31">
    <location>
        <begin position="1"/>
        <end position="75"/>
    </location>
</feature>
<comment type="function">
    <text evidence="1">Binds the 23S rRNA.</text>
</comment>
<comment type="subunit">
    <text evidence="1">Part of the 50S ribosomal subunit.</text>
</comment>
<comment type="similarity">
    <text evidence="1">Belongs to the bacterial ribosomal protein bL31 family. Type A subfamily.</text>
</comment>
<sequence>MKQDIHPKYKEVTVNCANCGNSFVTRSTRPTIKVDICNNCHPFYTGKQTLVDTAGRVERFNKRFAKSTAAQASAQ</sequence>
<evidence type="ECO:0000255" key="1">
    <source>
        <dbReference type="HAMAP-Rule" id="MF_00501"/>
    </source>
</evidence>
<evidence type="ECO:0000305" key="2"/>
<keyword id="KW-1185">Reference proteome</keyword>
<keyword id="KW-0687">Ribonucleoprotein</keyword>
<keyword id="KW-0689">Ribosomal protein</keyword>
<keyword id="KW-0694">RNA-binding</keyword>
<keyword id="KW-0699">rRNA-binding</keyword>
<organism>
    <name type="scientific">Pelodictyon phaeoclathratiforme (strain DSM 5477 / BU-1)</name>
    <dbReference type="NCBI Taxonomy" id="324925"/>
    <lineage>
        <taxon>Bacteria</taxon>
        <taxon>Pseudomonadati</taxon>
        <taxon>Chlorobiota</taxon>
        <taxon>Chlorobiia</taxon>
        <taxon>Chlorobiales</taxon>
        <taxon>Chlorobiaceae</taxon>
        <taxon>Chlorobium/Pelodictyon group</taxon>
        <taxon>Pelodictyon</taxon>
    </lineage>
</organism>
<gene>
    <name evidence="1" type="primary">rpmE</name>
    <name type="ordered locus">Ppha_2402</name>
</gene>